<protein>
    <recommendedName>
        <fullName>Thiamine biosynthesis regulatory protein</fullName>
    </recommendedName>
</protein>
<sequence length="450" mass="51823">MVNSKRQQRSKKVASSSKVPPTKGRTFTGCWACRFKKRRCDENRPICSLCAKHGDNCSYDIRLMWLEENIYKVRKHSLISSLQARKSKSKPLCQKISKSRFKQMTHFRQLSPPTSDCEDSVHEASKETTLPNDNTFTISVRRLKIYNNAVASVFGSMTNRDYTQKRIDKKLDELLNMVENDISVVNLNCSKHGPYSVFRANPAAVTSALTDQLPSPGHSMSSAEETTTAALSSPPEDSTSLIDIIQGKIFGILWFNCYGNMILNRQEYTTWFINKMRNSLTTEFIRFLGKIIDDPDINMASCLFKECIARWSCVDWQSIAITMLVIIHGYTCPNLTKLLRVWFLQQKLLRFSMYPLVNFIINNTQDLDVLYHCNGLLGNADLFEDPYQDELTSELHVLVTERLVNSWKDTILQQLCSCQDTTLSCSQLRYWQLQLKCNQQFYKDVYAMQD</sequence>
<comment type="function">
    <text>Positive regulator of thiamine biosynthesis.</text>
</comment>
<comment type="subcellular location">
    <subcellularLocation>
        <location evidence="3">Nucleus</location>
    </subcellularLocation>
</comment>
<proteinExistence type="predicted"/>
<keyword id="KW-0010">Activator</keyword>
<keyword id="KW-0238">DNA-binding</keyword>
<keyword id="KW-0479">Metal-binding</keyword>
<keyword id="KW-0539">Nucleus</keyword>
<keyword id="KW-1185">Reference proteome</keyword>
<keyword id="KW-0784">Thiamine biosynthesis</keyword>
<keyword id="KW-0804">Transcription</keyword>
<keyword id="KW-0805">Transcription regulation</keyword>
<keyword id="KW-0862">Zinc</keyword>
<name>THI2_YEAST</name>
<feature type="chain" id="PRO_0000114984" description="Thiamine biosynthesis regulatory protein">
    <location>
        <begin position="1"/>
        <end position="450"/>
    </location>
</feature>
<feature type="DNA-binding region" description="Zn(2)-C6 fungal-type" evidence="1">
    <location>
        <begin position="30"/>
        <end position="57"/>
    </location>
</feature>
<feature type="region of interest" description="Disordered" evidence="2">
    <location>
        <begin position="1"/>
        <end position="23"/>
    </location>
</feature>
<feature type="region of interest" description="Disordered" evidence="2">
    <location>
        <begin position="210"/>
        <end position="234"/>
    </location>
</feature>
<feature type="compositionally biased region" description="Basic residues" evidence="2">
    <location>
        <begin position="1"/>
        <end position="12"/>
    </location>
</feature>
<feature type="compositionally biased region" description="Low complexity" evidence="2">
    <location>
        <begin position="13"/>
        <end position="23"/>
    </location>
</feature>
<accession>P38141</accession>
<accession>D6VQN6</accession>
<organism>
    <name type="scientific">Saccharomyces cerevisiae (strain ATCC 204508 / S288c)</name>
    <name type="common">Baker's yeast</name>
    <dbReference type="NCBI Taxonomy" id="559292"/>
    <lineage>
        <taxon>Eukaryota</taxon>
        <taxon>Fungi</taxon>
        <taxon>Dikarya</taxon>
        <taxon>Ascomycota</taxon>
        <taxon>Saccharomycotina</taxon>
        <taxon>Saccharomycetes</taxon>
        <taxon>Saccharomycetales</taxon>
        <taxon>Saccharomycetaceae</taxon>
        <taxon>Saccharomyces</taxon>
    </lineage>
</organism>
<dbReference type="EMBL" id="D32073">
    <property type="protein sequence ID" value="BAA22093.1"/>
    <property type="molecule type" value="Genomic_DNA"/>
</dbReference>
<dbReference type="EMBL" id="Z36109">
    <property type="protein sequence ID" value="CAA85203.1"/>
    <property type="molecule type" value="Genomic_DNA"/>
</dbReference>
<dbReference type="EMBL" id="BK006936">
    <property type="protein sequence ID" value="DAA07356.1"/>
    <property type="molecule type" value="Genomic_DNA"/>
</dbReference>
<dbReference type="PIR" id="S46117">
    <property type="entry name" value="S46117"/>
</dbReference>
<dbReference type="RefSeq" id="NP_009799.3">
    <property type="nucleotide sequence ID" value="NM_001178588.3"/>
</dbReference>
<dbReference type="SMR" id="P38141"/>
<dbReference type="BioGRID" id="32935">
    <property type="interactions" value="35"/>
</dbReference>
<dbReference type="DIP" id="DIP-5362N"/>
<dbReference type="FunCoup" id="P38141">
    <property type="interactions" value="841"/>
</dbReference>
<dbReference type="IntAct" id="P38141">
    <property type="interactions" value="1"/>
</dbReference>
<dbReference type="MINT" id="P38141"/>
<dbReference type="STRING" id="4932.YBR240C"/>
<dbReference type="PaxDb" id="4932-YBR240C"/>
<dbReference type="EnsemblFungi" id="YBR240C_mRNA">
    <property type="protein sequence ID" value="YBR240C"/>
    <property type="gene ID" value="YBR240C"/>
</dbReference>
<dbReference type="GeneID" id="852542"/>
<dbReference type="KEGG" id="sce:YBR240C"/>
<dbReference type="AGR" id="SGD:S000000444"/>
<dbReference type="SGD" id="S000000444">
    <property type="gene designation" value="THI2"/>
</dbReference>
<dbReference type="VEuPathDB" id="FungiDB:YBR240C"/>
<dbReference type="eggNOG" id="ENOG502QU1Y">
    <property type="taxonomic scope" value="Eukaryota"/>
</dbReference>
<dbReference type="HOGENOM" id="CLU_050082_0_0_1"/>
<dbReference type="InParanoid" id="P38141"/>
<dbReference type="OMA" id="CWACRLK"/>
<dbReference type="OrthoDB" id="416217at2759"/>
<dbReference type="BioCyc" id="YEAST:G3O-29171-MONOMER"/>
<dbReference type="BioGRID-ORCS" id="852542">
    <property type="hits" value="0 hits in 10 CRISPR screens"/>
</dbReference>
<dbReference type="PRO" id="PR:P38141"/>
<dbReference type="Proteomes" id="UP000002311">
    <property type="component" value="Chromosome II"/>
</dbReference>
<dbReference type="RNAct" id="P38141">
    <property type="molecule type" value="protein"/>
</dbReference>
<dbReference type="GO" id="GO:0005634">
    <property type="term" value="C:nucleus"/>
    <property type="evidence" value="ECO:0000314"/>
    <property type="project" value="SGD"/>
</dbReference>
<dbReference type="GO" id="GO:0000981">
    <property type="term" value="F:DNA-binding transcription factor activity, RNA polymerase II-specific"/>
    <property type="evidence" value="ECO:0007669"/>
    <property type="project" value="InterPro"/>
</dbReference>
<dbReference type="GO" id="GO:0000978">
    <property type="term" value="F:RNA polymerase II cis-regulatory region sequence-specific DNA binding"/>
    <property type="evidence" value="ECO:0000314"/>
    <property type="project" value="SGD"/>
</dbReference>
<dbReference type="GO" id="GO:0008270">
    <property type="term" value="F:zinc ion binding"/>
    <property type="evidence" value="ECO:0007669"/>
    <property type="project" value="InterPro"/>
</dbReference>
<dbReference type="GO" id="GO:0090180">
    <property type="term" value="P:positive regulation of thiamine biosynthetic process"/>
    <property type="evidence" value="ECO:0000315"/>
    <property type="project" value="SGD"/>
</dbReference>
<dbReference type="GO" id="GO:0045944">
    <property type="term" value="P:positive regulation of transcription by RNA polymerase II"/>
    <property type="evidence" value="ECO:0000314"/>
    <property type="project" value="SGD"/>
</dbReference>
<dbReference type="GO" id="GO:0009228">
    <property type="term" value="P:thiamine biosynthetic process"/>
    <property type="evidence" value="ECO:0007669"/>
    <property type="project" value="UniProtKB-KW"/>
</dbReference>
<dbReference type="CDD" id="cd00067">
    <property type="entry name" value="GAL4"/>
    <property type="match status" value="1"/>
</dbReference>
<dbReference type="FunFam" id="4.10.240.10:FF:000017">
    <property type="entry name" value="Transcriptional regulator UME6"/>
    <property type="match status" value="1"/>
</dbReference>
<dbReference type="Gene3D" id="4.10.240.10">
    <property type="entry name" value="Zn(2)-C6 fungal-type DNA-binding domain"/>
    <property type="match status" value="1"/>
</dbReference>
<dbReference type="InterPro" id="IPR050675">
    <property type="entry name" value="OAF3"/>
</dbReference>
<dbReference type="InterPro" id="IPR036864">
    <property type="entry name" value="Zn2-C6_fun-type_DNA-bd_sf"/>
</dbReference>
<dbReference type="InterPro" id="IPR001138">
    <property type="entry name" value="Zn2Cys6_DnaBD"/>
</dbReference>
<dbReference type="PANTHER" id="PTHR31069:SF32">
    <property type="entry name" value="ARGININE METABOLISM REGULATION PROTEIN II"/>
    <property type="match status" value="1"/>
</dbReference>
<dbReference type="PANTHER" id="PTHR31069">
    <property type="entry name" value="OLEATE-ACTIVATED TRANSCRIPTION FACTOR 1-RELATED"/>
    <property type="match status" value="1"/>
</dbReference>
<dbReference type="Pfam" id="PF00172">
    <property type="entry name" value="Zn_clus"/>
    <property type="match status" value="1"/>
</dbReference>
<dbReference type="SMART" id="SM00066">
    <property type="entry name" value="GAL4"/>
    <property type="match status" value="1"/>
</dbReference>
<dbReference type="SUPFAM" id="SSF57701">
    <property type="entry name" value="Zn2/Cys6 DNA-binding domain"/>
    <property type="match status" value="1"/>
</dbReference>
<dbReference type="PROSITE" id="PS00463">
    <property type="entry name" value="ZN2_CY6_FUNGAL_1"/>
    <property type="match status" value="1"/>
</dbReference>
<dbReference type="PROSITE" id="PS50048">
    <property type="entry name" value="ZN2_CY6_FUNGAL_2"/>
    <property type="match status" value="1"/>
</dbReference>
<reference key="1">
    <citation type="submission" date="1997-09" db="EMBL/GenBank/DDBJ databases">
        <authorList>
            <person name="Nishimura H."/>
            <person name="Nosaka K."/>
            <person name="Kaneko Y."/>
            <person name="Iwashima A."/>
        </authorList>
    </citation>
    <scope>NUCLEOTIDE SEQUENCE [GENOMIC DNA]</scope>
    <source>
        <strain>S288c / GRF88</strain>
    </source>
</reference>
<reference key="2">
    <citation type="journal article" date="1994" name="EMBO J.">
        <title>Complete DNA sequence of yeast chromosome II.</title>
        <authorList>
            <person name="Feldmann H."/>
            <person name="Aigle M."/>
            <person name="Aljinovic G."/>
            <person name="Andre B."/>
            <person name="Baclet M.C."/>
            <person name="Barthe C."/>
            <person name="Baur A."/>
            <person name="Becam A.-M."/>
            <person name="Biteau N."/>
            <person name="Boles E."/>
            <person name="Brandt T."/>
            <person name="Brendel M."/>
            <person name="Brueckner M."/>
            <person name="Bussereau F."/>
            <person name="Christiansen C."/>
            <person name="Contreras R."/>
            <person name="Crouzet M."/>
            <person name="Cziepluch C."/>
            <person name="Demolis N."/>
            <person name="Delaveau T."/>
            <person name="Doignon F."/>
            <person name="Domdey H."/>
            <person name="Duesterhus S."/>
            <person name="Dubois E."/>
            <person name="Dujon B."/>
            <person name="El Bakkoury M."/>
            <person name="Entian K.-D."/>
            <person name="Feuermann M."/>
            <person name="Fiers W."/>
            <person name="Fobo G.M."/>
            <person name="Fritz C."/>
            <person name="Gassenhuber J."/>
            <person name="Glansdorff N."/>
            <person name="Goffeau A."/>
            <person name="Grivell L.A."/>
            <person name="de Haan M."/>
            <person name="Hein C."/>
            <person name="Herbert C.J."/>
            <person name="Hollenberg C.P."/>
            <person name="Holmstroem K."/>
            <person name="Jacq C."/>
            <person name="Jacquet M."/>
            <person name="Jauniaux J.-C."/>
            <person name="Jonniaux J.-L."/>
            <person name="Kallesoee T."/>
            <person name="Kiesau P."/>
            <person name="Kirchrath L."/>
            <person name="Koetter P."/>
            <person name="Korol S."/>
            <person name="Liebl S."/>
            <person name="Logghe M."/>
            <person name="Lohan A.J.E."/>
            <person name="Louis E.J."/>
            <person name="Li Z.Y."/>
            <person name="Maat M.J."/>
            <person name="Mallet L."/>
            <person name="Mannhaupt G."/>
            <person name="Messenguy F."/>
            <person name="Miosga T."/>
            <person name="Molemans F."/>
            <person name="Mueller S."/>
            <person name="Nasr F."/>
            <person name="Obermaier B."/>
            <person name="Perea J."/>
            <person name="Pierard A."/>
            <person name="Piravandi E."/>
            <person name="Pohl F.M."/>
            <person name="Pohl T.M."/>
            <person name="Potier S."/>
            <person name="Proft M."/>
            <person name="Purnelle B."/>
            <person name="Ramezani Rad M."/>
            <person name="Rieger M."/>
            <person name="Rose M."/>
            <person name="Schaaff-Gerstenschlaeger I."/>
            <person name="Scherens B."/>
            <person name="Schwarzlose C."/>
            <person name="Skala J."/>
            <person name="Slonimski P.P."/>
            <person name="Smits P.H.M."/>
            <person name="Souciet J.-L."/>
            <person name="Steensma H.Y."/>
            <person name="Stucka R."/>
            <person name="Urrestarazu L.A."/>
            <person name="van der Aart Q.J.M."/>
            <person name="Van Dyck L."/>
            <person name="Vassarotti A."/>
            <person name="Vetter I."/>
            <person name="Vierendeels F."/>
            <person name="Vissers S."/>
            <person name="Wagner G."/>
            <person name="de Wergifosse P."/>
            <person name="Wolfe K.H."/>
            <person name="Zagulski M."/>
            <person name="Zimmermann F.K."/>
            <person name="Mewes H.-W."/>
            <person name="Kleine K."/>
        </authorList>
    </citation>
    <scope>NUCLEOTIDE SEQUENCE [LARGE SCALE GENOMIC DNA]</scope>
    <source>
        <strain>ATCC 204508 / S288c</strain>
    </source>
</reference>
<reference key="3">
    <citation type="journal article" date="2014" name="G3 (Bethesda)">
        <title>The reference genome sequence of Saccharomyces cerevisiae: Then and now.</title>
        <authorList>
            <person name="Engel S.R."/>
            <person name="Dietrich F.S."/>
            <person name="Fisk D.G."/>
            <person name="Binkley G."/>
            <person name="Balakrishnan R."/>
            <person name="Costanzo M.C."/>
            <person name="Dwight S.S."/>
            <person name="Hitz B.C."/>
            <person name="Karra K."/>
            <person name="Nash R.S."/>
            <person name="Weng S."/>
            <person name="Wong E.D."/>
            <person name="Lloyd P."/>
            <person name="Skrzypek M.S."/>
            <person name="Miyasato S.R."/>
            <person name="Simison M."/>
            <person name="Cherry J.M."/>
        </authorList>
    </citation>
    <scope>GENOME REANNOTATION</scope>
    <source>
        <strain>ATCC 204508 / S288c</strain>
    </source>
</reference>
<evidence type="ECO:0000255" key="1">
    <source>
        <dbReference type="PROSITE-ProRule" id="PRU00227"/>
    </source>
</evidence>
<evidence type="ECO:0000256" key="2">
    <source>
        <dbReference type="SAM" id="MobiDB-lite"/>
    </source>
</evidence>
<evidence type="ECO:0000305" key="3"/>
<gene>
    <name type="primary">THI2</name>
    <name type="synonym">PHO6</name>
    <name type="ordered locus">YBR240C</name>
    <name type="ORF">YBR1624</name>
</gene>